<evidence type="ECO:0000250" key="1"/>
<evidence type="ECO:0000305" key="2"/>
<name>RF2_MYCLE</name>
<sequence>MEPDRQTDIAALDSTLTTVERVLDVEGLRTRIEKLEHEASDPKLWDDQVRAQRVTSELSHAQGELRRIEELRRRLDDLPVLYELAAEERAAAAASGMEAFAEADAELKALRVDIEATEVRTLLSGEYDEREALITIRSGAGGVDAADWAEMLMRMYIRWAEQHKYGVEVLDTSYAEEAGVKSATFAVHAPFAYGTLASEQGTHRLVRISPFDNQSRRQTSFAEVEVLPVVEITDHIDIPEGDVRVDVYRSSGPGGQSVNTTDSAVRLTHVPTGLVVTCQNEKSQLQNKVSAMRVLQAKLLERKRLEERAELDALKGRGGSSWGNQIRSYVLHPYQMVKDLRNEYEVGNPTAVLDGDIDGFLEAGIRWRNRRDIS</sequence>
<comment type="function">
    <text evidence="1">Peptide chain release factor 2 directs the termination of translation in response to the peptide chain termination codons UGA and UAA.</text>
</comment>
<comment type="subcellular location">
    <subcellularLocation>
        <location evidence="1">Cytoplasm</location>
    </subcellularLocation>
</comment>
<comment type="PTM">
    <text evidence="1">Methylated by PrmC. Methylation increases the termination efficiency of RF2 (By similarity).</text>
</comment>
<comment type="similarity">
    <text evidence="2">Belongs to the prokaryotic/mitochondrial release factor family.</text>
</comment>
<accession>O32885</accession>
<organism>
    <name type="scientific">Mycobacterium leprae (strain TN)</name>
    <dbReference type="NCBI Taxonomy" id="272631"/>
    <lineage>
        <taxon>Bacteria</taxon>
        <taxon>Bacillati</taxon>
        <taxon>Actinomycetota</taxon>
        <taxon>Actinomycetes</taxon>
        <taxon>Mycobacteriales</taxon>
        <taxon>Mycobacteriaceae</taxon>
        <taxon>Mycobacterium</taxon>
    </lineage>
</organism>
<keyword id="KW-0963">Cytoplasm</keyword>
<keyword id="KW-0488">Methylation</keyword>
<keyword id="KW-0648">Protein biosynthesis</keyword>
<keyword id="KW-1185">Reference proteome</keyword>
<gene>
    <name type="primary">prfB</name>
    <name type="ordered locus">ML0667</name>
    <name type="ORF">MLCB1779.24c</name>
</gene>
<protein>
    <recommendedName>
        <fullName>Peptide chain release factor 2</fullName>
        <shortName>RF-2</shortName>
    </recommendedName>
</protein>
<proteinExistence type="inferred from homology"/>
<dbReference type="EMBL" id="Z98271">
    <property type="protein sequence ID" value="CAB11005.1"/>
    <property type="molecule type" value="Genomic_DNA"/>
</dbReference>
<dbReference type="EMBL" id="AL583919">
    <property type="protein sequence ID" value="CAC30176.1"/>
    <property type="molecule type" value="Genomic_DNA"/>
</dbReference>
<dbReference type="PIR" id="T45313">
    <property type="entry name" value="T45313"/>
</dbReference>
<dbReference type="RefSeq" id="NP_301541.1">
    <property type="nucleotide sequence ID" value="NC_002677.1"/>
</dbReference>
<dbReference type="RefSeq" id="WP_010907865.1">
    <property type="nucleotide sequence ID" value="NC_002677.1"/>
</dbReference>
<dbReference type="SMR" id="O32885"/>
<dbReference type="STRING" id="272631.gene:17574490"/>
<dbReference type="KEGG" id="mle:ML0667"/>
<dbReference type="PATRIC" id="fig|272631.5.peg.1188"/>
<dbReference type="Leproma" id="ML0667"/>
<dbReference type="eggNOG" id="COG1186">
    <property type="taxonomic scope" value="Bacteria"/>
</dbReference>
<dbReference type="HOGENOM" id="CLU_036856_0_1_11"/>
<dbReference type="OrthoDB" id="9806673at2"/>
<dbReference type="Proteomes" id="UP000000806">
    <property type="component" value="Chromosome"/>
</dbReference>
<dbReference type="GO" id="GO:0005737">
    <property type="term" value="C:cytoplasm"/>
    <property type="evidence" value="ECO:0007669"/>
    <property type="project" value="UniProtKB-SubCell"/>
</dbReference>
<dbReference type="GO" id="GO:0016149">
    <property type="term" value="F:translation release factor activity, codon specific"/>
    <property type="evidence" value="ECO:0007669"/>
    <property type="project" value="UniProtKB-UniRule"/>
</dbReference>
<dbReference type="FunFam" id="3.30.160.20:FF:000010">
    <property type="entry name" value="Peptide chain release factor 2"/>
    <property type="match status" value="1"/>
</dbReference>
<dbReference type="Gene3D" id="3.30.160.20">
    <property type="match status" value="1"/>
</dbReference>
<dbReference type="Gene3D" id="3.30.70.1660">
    <property type="match status" value="1"/>
</dbReference>
<dbReference type="Gene3D" id="1.20.58.410">
    <property type="entry name" value="Release factor"/>
    <property type="match status" value="1"/>
</dbReference>
<dbReference type="HAMAP" id="MF_00094">
    <property type="entry name" value="Rel_fac_2"/>
    <property type="match status" value="1"/>
</dbReference>
<dbReference type="InterPro" id="IPR005139">
    <property type="entry name" value="PCRF"/>
</dbReference>
<dbReference type="InterPro" id="IPR000352">
    <property type="entry name" value="Pep_chain_release_fac_I"/>
</dbReference>
<dbReference type="InterPro" id="IPR045853">
    <property type="entry name" value="Pep_chain_release_fac_I_sf"/>
</dbReference>
<dbReference type="InterPro" id="IPR004374">
    <property type="entry name" value="PrfB"/>
</dbReference>
<dbReference type="NCBIfam" id="TIGR00020">
    <property type="entry name" value="prfB"/>
    <property type="match status" value="1"/>
</dbReference>
<dbReference type="PANTHER" id="PTHR43116:SF3">
    <property type="entry name" value="CLASS I PEPTIDE CHAIN RELEASE FACTOR"/>
    <property type="match status" value="1"/>
</dbReference>
<dbReference type="PANTHER" id="PTHR43116">
    <property type="entry name" value="PEPTIDE CHAIN RELEASE FACTOR 2"/>
    <property type="match status" value="1"/>
</dbReference>
<dbReference type="Pfam" id="PF03462">
    <property type="entry name" value="PCRF"/>
    <property type="match status" value="1"/>
</dbReference>
<dbReference type="Pfam" id="PF00472">
    <property type="entry name" value="RF-1"/>
    <property type="match status" value="1"/>
</dbReference>
<dbReference type="SMART" id="SM00937">
    <property type="entry name" value="PCRF"/>
    <property type="match status" value="1"/>
</dbReference>
<dbReference type="SUPFAM" id="SSF75620">
    <property type="entry name" value="Release factor"/>
    <property type="match status" value="1"/>
</dbReference>
<dbReference type="PROSITE" id="PS00745">
    <property type="entry name" value="RF_PROK_I"/>
    <property type="match status" value="1"/>
</dbReference>
<reference key="1">
    <citation type="journal article" date="2001" name="Nature">
        <title>Massive gene decay in the leprosy bacillus.</title>
        <authorList>
            <person name="Cole S.T."/>
            <person name="Eiglmeier K."/>
            <person name="Parkhill J."/>
            <person name="James K.D."/>
            <person name="Thomson N.R."/>
            <person name="Wheeler P.R."/>
            <person name="Honore N."/>
            <person name="Garnier T."/>
            <person name="Churcher C.M."/>
            <person name="Harris D.E."/>
            <person name="Mungall K.L."/>
            <person name="Basham D."/>
            <person name="Brown D."/>
            <person name="Chillingworth T."/>
            <person name="Connor R."/>
            <person name="Davies R.M."/>
            <person name="Devlin K."/>
            <person name="Duthoy S."/>
            <person name="Feltwell T."/>
            <person name="Fraser A."/>
            <person name="Hamlin N."/>
            <person name="Holroyd S."/>
            <person name="Hornsby T."/>
            <person name="Jagels K."/>
            <person name="Lacroix C."/>
            <person name="Maclean J."/>
            <person name="Moule S."/>
            <person name="Murphy L.D."/>
            <person name="Oliver K."/>
            <person name="Quail M.A."/>
            <person name="Rajandream M.A."/>
            <person name="Rutherford K.M."/>
            <person name="Rutter S."/>
            <person name="Seeger K."/>
            <person name="Simon S."/>
            <person name="Simmonds M."/>
            <person name="Skelton J."/>
            <person name="Squares R."/>
            <person name="Squares S."/>
            <person name="Stevens K."/>
            <person name="Taylor K."/>
            <person name="Whitehead S."/>
            <person name="Woodward J.R."/>
            <person name="Barrell B.G."/>
        </authorList>
    </citation>
    <scope>NUCLEOTIDE SEQUENCE [LARGE SCALE GENOMIC DNA]</scope>
    <source>
        <strain>TN</strain>
    </source>
</reference>
<feature type="chain" id="PRO_0000166831" description="Peptide chain release factor 2">
    <location>
        <begin position="1"/>
        <end position="374"/>
    </location>
</feature>
<feature type="modified residue" description="N5-methylglutamine" evidence="1">
    <location>
        <position position="256"/>
    </location>
</feature>